<feature type="chain" id="PRO_0000147367" description="UPF0254 protein MJ1251">
    <location>
        <begin position="1"/>
        <end position="167"/>
    </location>
</feature>
<feature type="strand" evidence="2">
    <location>
        <begin position="2"/>
        <end position="9"/>
    </location>
</feature>
<feature type="turn" evidence="2">
    <location>
        <begin position="10"/>
        <end position="13"/>
    </location>
</feature>
<feature type="helix" evidence="2">
    <location>
        <begin position="14"/>
        <end position="24"/>
    </location>
</feature>
<feature type="helix" evidence="2">
    <location>
        <begin position="32"/>
        <end position="34"/>
    </location>
</feature>
<feature type="helix" evidence="2">
    <location>
        <begin position="37"/>
        <end position="43"/>
    </location>
</feature>
<feature type="strand" evidence="2">
    <location>
        <begin position="46"/>
        <end position="53"/>
    </location>
</feature>
<feature type="helix" evidence="2">
    <location>
        <begin position="57"/>
        <end position="64"/>
    </location>
</feature>
<feature type="strand" evidence="3">
    <location>
        <begin position="72"/>
        <end position="75"/>
    </location>
</feature>
<feature type="strand" evidence="2">
    <location>
        <begin position="76"/>
        <end position="78"/>
    </location>
</feature>
<feature type="helix" evidence="2">
    <location>
        <begin position="83"/>
        <end position="101"/>
    </location>
</feature>
<feature type="strand" evidence="2">
    <location>
        <begin position="104"/>
        <end position="110"/>
    </location>
</feature>
<feature type="strand" evidence="2">
    <location>
        <begin position="112"/>
        <end position="115"/>
    </location>
</feature>
<feature type="strand" evidence="2">
    <location>
        <begin position="117"/>
        <end position="121"/>
    </location>
</feature>
<feature type="strand" evidence="2">
    <location>
        <begin position="126"/>
        <end position="129"/>
    </location>
</feature>
<feature type="turn" evidence="2">
    <location>
        <begin position="137"/>
        <end position="139"/>
    </location>
</feature>
<feature type="helix" evidence="2">
    <location>
        <begin position="143"/>
        <end position="166"/>
    </location>
</feature>
<comment type="similarity">
    <text evidence="1">Belongs to the UPF0254 family.</text>
</comment>
<accession>Q58649</accession>
<dbReference type="EMBL" id="L77117">
    <property type="protein sequence ID" value="AAB99254.1"/>
    <property type="molecule type" value="Genomic_DNA"/>
</dbReference>
<dbReference type="PIR" id="C64456">
    <property type="entry name" value="C64456"/>
</dbReference>
<dbReference type="RefSeq" id="WP_010870765.1">
    <property type="nucleotide sequence ID" value="NC_000909.1"/>
</dbReference>
<dbReference type="PDB" id="3WVA">
    <property type="method" value="X-ray"/>
    <property type="resolution" value="1.40 A"/>
    <property type="chains" value="A/B=1-167"/>
</dbReference>
<dbReference type="PDB" id="3WVB">
    <property type="method" value="X-ray"/>
    <property type="resolution" value="1.70 A"/>
    <property type="chains" value="A/B=1-167"/>
</dbReference>
<dbReference type="PDB" id="3WVC">
    <property type="method" value="X-ray"/>
    <property type="resolution" value="2.00 A"/>
    <property type="chains" value="A/B=1-167"/>
</dbReference>
<dbReference type="PDBsum" id="3WVA"/>
<dbReference type="PDBsum" id="3WVB"/>
<dbReference type="PDBsum" id="3WVC"/>
<dbReference type="SMR" id="Q58649"/>
<dbReference type="PaxDb" id="243232-MJ_1251"/>
<dbReference type="EnsemblBacteria" id="AAB99254">
    <property type="protein sequence ID" value="AAB99254"/>
    <property type="gene ID" value="MJ_1251"/>
</dbReference>
<dbReference type="GeneID" id="1452150"/>
<dbReference type="KEGG" id="mja:MJ_1251"/>
<dbReference type="eggNOG" id="arCOG04865">
    <property type="taxonomic scope" value="Archaea"/>
</dbReference>
<dbReference type="HOGENOM" id="CLU_1451416_0_0_2"/>
<dbReference type="InParanoid" id="Q58649"/>
<dbReference type="OrthoDB" id="59686at2157"/>
<dbReference type="EvolutionaryTrace" id="Q58649"/>
<dbReference type="Proteomes" id="UP000000805">
    <property type="component" value="Chromosome"/>
</dbReference>
<dbReference type="HAMAP" id="MF_00673">
    <property type="entry name" value="UPF0254"/>
    <property type="match status" value="1"/>
</dbReference>
<dbReference type="InterPro" id="IPR009625">
    <property type="entry name" value="HcgF"/>
</dbReference>
<dbReference type="NCBIfam" id="NF002122">
    <property type="entry name" value="PRK00962.1"/>
    <property type="match status" value="1"/>
</dbReference>
<dbReference type="Pfam" id="PF06787">
    <property type="entry name" value="HcgF"/>
    <property type="match status" value="1"/>
</dbReference>
<dbReference type="PIRSF" id="PIRSF018786">
    <property type="entry name" value="UPF0254"/>
    <property type="match status" value="1"/>
</dbReference>
<reference key="1">
    <citation type="journal article" date="1996" name="Science">
        <title>Complete genome sequence of the methanogenic archaeon, Methanococcus jannaschii.</title>
        <authorList>
            <person name="Bult C.J."/>
            <person name="White O."/>
            <person name="Olsen G.J."/>
            <person name="Zhou L."/>
            <person name="Fleischmann R.D."/>
            <person name="Sutton G.G."/>
            <person name="Blake J.A."/>
            <person name="FitzGerald L.M."/>
            <person name="Clayton R.A."/>
            <person name="Gocayne J.D."/>
            <person name="Kerlavage A.R."/>
            <person name="Dougherty B.A."/>
            <person name="Tomb J.-F."/>
            <person name="Adams M.D."/>
            <person name="Reich C.I."/>
            <person name="Overbeek R."/>
            <person name="Kirkness E.F."/>
            <person name="Weinstock K.G."/>
            <person name="Merrick J.M."/>
            <person name="Glodek A."/>
            <person name="Scott J.L."/>
            <person name="Geoghagen N.S.M."/>
            <person name="Weidman J.F."/>
            <person name="Fuhrmann J.L."/>
            <person name="Nguyen D."/>
            <person name="Utterback T.R."/>
            <person name="Kelley J.M."/>
            <person name="Peterson J.D."/>
            <person name="Sadow P.W."/>
            <person name="Hanna M.C."/>
            <person name="Cotton M.D."/>
            <person name="Roberts K.M."/>
            <person name="Hurst M.A."/>
            <person name="Kaine B.P."/>
            <person name="Borodovsky M."/>
            <person name="Klenk H.-P."/>
            <person name="Fraser C.M."/>
            <person name="Smith H.O."/>
            <person name="Woese C.R."/>
            <person name="Venter J.C."/>
        </authorList>
    </citation>
    <scope>NUCLEOTIDE SEQUENCE [LARGE SCALE GENOMIC DNA]</scope>
    <source>
        <strain>ATCC 43067 / DSM 2661 / JAL-1 / JCM 10045 / NBRC 100440</strain>
    </source>
</reference>
<evidence type="ECO:0000305" key="1"/>
<evidence type="ECO:0007829" key="2">
    <source>
        <dbReference type="PDB" id="3WVA"/>
    </source>
</evidence>
<evidence type="ECO:0007829" key="3">
    <source>
        <dbReference type="PDB" id="3WVC"/>
    </source>
</evidence>
<proteinExistence type="evidence at protein level"/>
<keyword id="KW-0002">3D-structure</keyword>
<keyword id="KW-1185">Reference proteome</keyword>
<sequence>MITVATAECFTHANIGLTIHKAAAGYEDFEFKYLFSEEDLKLMKNVRVISAMFVPSIIGVEKLLDIKLPEPDFNYKYAKAYSEEKDLEVAKLMAEGLKKKLNVNISIGSTAGVGRGAICILTDNNRYLFTSDVYANLITFENIKERQKNGIEKGIKRFLEILKKEYF</sequence>
<name>Y1251_METJA</name>
<protein>
    <recommendedName>
        <fullName>UPF0254 protein MJ1251</fullName>
    </recommendedName>
</protein>
<organism>
    <name type="scientific">Methanocaldococcus jannaschii (strain ATCC 43067 / DSM 2661 / JAL-1 / JCM 10045 / NBRC 100440)</name>
    <name type="common">Methanococcus jannaschii</name>
    <dbReference type="NCBI Taxonomy" id="243232"/>
    <lineage>
        <taxon>Archaea</taxon>
        <taxon>Methanobacteriati</taxon>
        <taxon>Methanobacteriota</taxon>
        <taxon>Methanomada group</taxon>
        <taxon>Methanococci</taxon>
        <taxon>Methanococcales</taxon>
        <taxon>Methanocaldococcaceae</taxon>
        <taxon>Methanocaldococcus</taxon>
    </lineage>
</organism>
<gene>
    <name type="ordered locus">MJ1251</name>
</gene>